<organism>
    <name type="scientific">Burkholderia vietnamiensis (strain G4 / LMG 22486)</name>
    <name type="common">Burkholderia cepacia (strain R1808)</name>
    <dbReference type="NCBI Taxonomy" id="269482"/>
    <lineage>
        <taxon>Bacteria</taxon>
        <taxon>Pseudomonadati</taxon>
        <taxon>Pseudomonadota</taxon>
        <taxon>Betaproteobacteria</taxon>
        <taxon>Burkholderiales</taxon>
        <taxon>Burkholderiaceae</taxon>
        <taxon>Burkholderia</taxon>
        <taxon>Burkholderia cepacia complex</taxon>
    </lineage>
</organism>
<gene>
    <name evidence="1" type="primary">psd</name>
    <name type="ordered locus">Bcep1808_2346</name>
</gene>
<evidence type="ECO:0000255" key="1">
    <source>
        <dbReference type="HAMAP-Rule" id="MF_00664"/>
    </source>
</evidence>
<dbReference type="EC" id="4.1.1.65" evidence="1"/>
<dbReference type="EMBL" id="CP000614">
    <property type="protein sequence ID" value="ABO55345.1"/>
    <property type="molecule type" value="Genomic_DNA"/>
</dbReference>
<dbReference type="SMR" id="A4JGE2"/>
<dbReference type="KEGG" id="bvi:Bcep1808_2346"/>
<dbReference type="eggNOG" id="COG0688">
    <property type="taxonomic scope" value="Bacteria"/>
</dbReference>
<dbReference type="HOGENOM" id="CLU_072492_0_0_4"/>
<dbReference type="UniPathway" id="UPA00558">
    <property type="reaction ID" value="UER00616"/>
</dbReference>
<dbReference type="Proteomes" id="UP000002287">
    <property type="component" value="Chromosome 1"/>
</dbReference>
<dbReference type="GO" id="GO:0005886">
    <property type="term" value="C:plasma membrane"/>
    <property type="evidence" value="ECO:0007669"/>
    <property type="project" value="UniProtKB-SubCell"/>
</dbReference>
<dbReference type="GO" id="GO:0004609">
    <property type="term" value="F:phosphatidylserine decarboxylase activity"/>
    <property type="evidence" value="ECO:0007669"/>
    <property type="project" value="UniProtKB-UniRule"/>
</dbReference>
<dbReference type="GO" id="GO:0006646">
    <property type="term" value="P:phosphatidylethanolamine biosynthetic process"/>
    <property type="evidence" value="ECO:0007669"/>
    <property type="project" value="UniProtKB-UniRule"/>
</dbReference>
<dbReference type="HAMAP" id="MF_00664">
    <property type="entry name" value="PS_decarb_PSD_A"/>
    <property type="match status" value="1"/>
</dbReference>
<dbReference type="InterPro" id="IPR003817">
    <property type="entry name" value="PS_Dcarbxylase"/>
</dbReference>
<dbReference type="InterPro" id="IPR033175">
    <property type="entry name" value="PSD-A"/>
</dbReference>
<dbReference type="NCBIfam" id="TIGR00164">
    <property type="entry name" value="AS_decarb"/>
    <property type="match status" value="1"/>
</dbReference>
<dbReference type="NCBIfam" id="NF003678">
    <property type="entry name" value="PRK05305.1-2"/>
    <property type="match status" value="1"/>
</dbReference>
<dbReference type="NCBIfam" id="NF003680">
    <property type="entry name" value="PRK05305.1-5"/>
    <property type="match status" value="1"/>
</dbReference>
<dbReference type="NCBIfam" id="NF003685">
    <property type="entry name" value="PRK05305.2-5"/>
    <property type="match status" value="1"/>
</dbReference>
<dbReference type="PANTHER" id="PTHR35809">
    <property type="entry name" value="ARCHAETIDYLSERINE DECARBOXYLASE PROENZYME-RELATED"/>
    <property type="match status" value="1"/>
</dbReference>
<dbReference type="PANTHER" id="PTHR35809:SF1">
    <property type="entry name" value="ARCHAETIDYLSERINE DECARBOXYLASE PROENZYME-RELATED"/>
    <property type="match status" value="1"/>
</dbReference>
<dbReference type="Pfam" id="PF02666">
    <property type="entry name" value="PS_Dcarbxylase"/>
    <property type="match status" value="1"/>
</dbReference>
<keyword id="KW-1003">Cell membrane</keyword>
<keyword id="KW-0210">Decarboxylase</keyword>
<keyword id="KW-0444">Lipid biosynthesis</keyword>
<keyword id="KW-0443">Lipid metabolism</keyword>
<keyword id="KW-0456">Lyase</keyword>
<keyword id="KW-0472">Membrane</keyword>
<keyword id="KW-0594">Phospholipid biosynthesis</keyword>
<keyword id="KW-1208">Phospholipid metabolism</keyword>
<keyword id="KW-0670">Pyruvate</keyword>
<keyword id="KW-0865">Zymogen</keyword>
<reference key="1">
    <citation type="submission" date="2007-03" db="EMBL/GenBank/DDBJ databases">
        <title>Complete sequence of chromosome 1 of Burkholderia vietnamiensis G4.</title>
        <authorList>
            <consortium name="US DOE Joint Genome Institute"/>
            <person name="Copeland A."/>
            <person name="Lucas S."/>
            <person name="Lapidus A."/>
            <person name="Barry K."/>
            <person name="Detter J.C."/>
            <person name="Glavina del Rio T."/>
            <person name="Hammon N."/>
            <person name="Israni S."/>
            <person name="Dalin E."/>
            <person name="Tice H."/>
            <person name="Pitluck S."/>
            <person name="Chain P."/>
            <person name="Malfatti S."/>
            <person name="Shin M."/>
            <person name="Vergez L."/>
            <person name="Schmutz J."/>
            <person name="Larimer F."/>
            <person name="Land M."/>
            <person name="Hauser L."/>
            <person name="Kyrpides N."/>
            <person name="Tiedje J."/>
            <person name="Richardson P."/>
        </authorList>
    </citation>
    <scope>NUCLEOTIDE SEQUENCE [LARGE SCALE GENOMIC DNA]</scope>
    <source>
        <strain>G4 / LMG 22486</strain>
    </source>
</reference>
<comment type="function">
    <text evidence="1">Catalyzes the formation of phosphatidylethanolamine (PtdEtn) from phosphatidylserine (PtdSer).</text>
</comment>
<comment type="catalytic activity">
    <reaction evidence="1">
        <text>a 1,2-diacyl-sn-glycero-3-phospho-L-serine + H(+) = a 1,2-diacyl-sn-glycero-3-phosphoethanolamine + CO2</text>
        <dbReference type="Rhea" id="RHEA:20828"/>
        <dbReference type="ChEBI" id="CHEBI:15378"/>
        <dbReference type="ChEBI" id="CHEBI:16526"/>
        <dbReference type="ChEBI" id="CHEBI:57262"/>
        <dbReference type="ChEBI" id="CHEBI:64612"/>
        <dbReference type="EC" id="4.1.1.65"/>
    </reaction>
</comment>
<comment type="cofactor">
    <cofactor evidence="1">
        <name>pyruvate</name>
        <dbReference type="ChEBI" id="CHEBI:15361"/>
    </cofactor>
    <text evidence="1">Binds 1 pyruvoyl group covalently per subunit.</text>
</comment>
<comment type="pathway">
    <text evidence="1">Phospholipid metabolism; phosphatidylethanolamine biosynthesis; phosphatidylethanolamine from CDP-diacylglycerol: step 2/2.</text>
</comment>
<comment type="subunit">
    <text evidence="1">Heterodimer of a large membrane-associated beta subunit and a small pyruvoyl-containing alpha subunit.</text>
</comment>
<comment type="subcellular location">
    <subcellularLocation>
        <location evidence="1">Cell membrane</location>
        <topology evidence="1">Peripheral membrane protein</topology>
    </subcellularLocation>
</comment>
<comment type="PTM">
    <text evidence="1">Is synthesized initially as an inactive proenzyme. Formation of the active enzyme involves a self-maturation process in which the active site pyruvoyl group is generated from an internal serine residue via an autocatalytic post-translational modification. Two non-identical subunits are generated from the proenzyme in this reaction, and the pyruvate is formed at the N-terminus of the alpha chain, which is derived from the carboxyl end of the proenzyme. The post-translation cleavage follows an unusual pathway, termed non-hydrolytic serinolysis, in which the side chain hydroxyl group of the serine supplies its oxygen atom to form the C-terminus of the beta chain, while the remainder of the serine residue undergoes an oxidative deamination to produce ammonia and the pyruvoyl prosthetic group on the alpha chain.</text>
</comment>
<comment type="similarity">
    <text evidence="1">Belongs to the phosphatidylserine decarboxylase family. PSD-A subfamily.</text>
</comment>
<sequence length="214" mass="23483">MNYPHPIIAREGWPFIAIAAVIALLIHAIGGFGFAWPFWLLLVFVVQFFRDPQRPIPAQPNAVLCPADGRIVAVETSHDPYANREALKISVFMNVFNVHSQRSPVDGAISKVEYFPGAFLNAAIDKASTENERNAVVIQTASGKTVTAVQIAGLIARRILCYVRAGEPLSRGQRYGFIRFGSRVDVYLPLGSRAKVSIGEKVYASSTILAELEQ</sequence>
<accession>A4JGE2</accession>
<name>PSD_BURVG</name>
<feature type="chain" id="PRO_1000026644" description="Phosphatidylserine decarboxylase beta chain" evidence="1">
    <location>
        <begin position="1"/>
        <end position="181"/>
    </location>
</feature>
<feature type="chain" id="PRO_1000026645" description="Phosphatidylserine decarboxylase alpha chain" evidence="1">
    <location>
        <begin position="182"/>
        <end position="214"/>
    </location>
</feature>
<feature type="active site" description="Schiff-base intermediate with substrate; via pyruvic acid" evidence="1">
    <location>
        <position position="182"/>
    </location>
</feature>
<feature type="site" description="Cleavage (non-hydrolytic); by autocatalysis" evidence="1">
    <location>
        <begin position="181"/>
        <end position="182"/>
    </location>
</feature>
<feature type="modified residue" description="Pyruvic acid (Ser); by autocatalysis" evidence="1">
    <location>
        <position position="182"/>
    </location>
</feature>
<protein>
    <recommendedName>
        <fullName evidence="1">Phosphatidylserine decarboxylase proenzyme</fullName>
        <ecNumber evidence="1">4.1.1.65</ecNumber>
    </recommendedName>
    <component>
        <recommendedName>
            <fullName evidence="1">Phosphatidylserine decarboxylase alpha chain</fullName>
        </recommendedName>
    </component>
    <component>
        <recommendedName>
            <fullName evidence="1">Phosphatidylserine decarboxylase beta chain</fullName>
        </recommendedName>
    </component>
</protein>
<proteinExistence type="inferred from homology"/>